<accession>B8F571</accession>
<protein>
    <recommendedName>
        <fullName evidence="1">tRNA U34 carboxymethyltransferase</fullName>
        <ecNumber evidence="1">2.5.1.-</ecNumber>
    </recommendedName>
</protein>
<keyword id="KW-1185">Reference proteome</keyword>
<keyword id="KW-0808">Transferase</keyword>
<keyword id="KW-0819">tRNA processing</keyword>
<sequence length="320" mass="36745">MIDFRPFYQQIATSPLSAWLETLPLQLKQWEKQTHGDYAKWAKMLDHLPSLPCEVNLADKVEARLVEPLSAGETQRLVHHLKQLMPWRKGPYHLYGVHIDCEWRSDFKWDRVLPHLSPLKDRLILDVGCGSGYHMWRMVGEGAKMVVGIDPTELFLCQFEAVRKLLNNDRRANLIPLGIEQMQPLQAFDTVFSMGVLYHRKSPLDHLAQLKNQLVKGGELVLETLVIDGDINDVLVPADRYAKMKNVYFIPSVPALINWLEKVGFKNVRCVDEAVTTSEEQRKTDWLENETLVDFLDPQDHSKTIEGYPAPKRAVIIATN</sequence>
<gene>
    <name evidence="1" type="primary">cmoB</name>
    <name type="ordered locus">HAPS_0841</name>
</gene>
<reference key="1">
    <citation type="journal article" date="2009" name="J. Bacteriol.">
        <title>Complete genome sequence of Haemophilus parasuis SH0165.</title>
        <authorList>
            <person name="Yue M."/>
            <person name="Yang F."/>
            <person name="Yang J."/>
            <person name="Bei W."/>
            <person name="Cai X."/>
            <person name="Chen L."/>
            <person name="Dong J."/>
            <person name="Zhou R."/>
            <person name="Jin M."/>
            <person name="Jin Q."/>
            <person name="Chen H."/>
        </authorList>
    </citation>
    <scope>NUCLEOTIDE SEQUENCE [LARGE SCALE GENOMIC DNA]</scope>
    <source>
        <strain>SH0165</strain>
    </source>
</reference>
<proteinExistence type="inferred from homology"/>
<dbReference type="EC" id="2.5.1.-" evidence="1"/>
<dbReference type="EMBL" id="CP001321">
    <property type="protein sequence ID" value="ACL32473.1"/>
    <property type="status" value="ALT_INIT"/>
    <property type="molecule type" value="Genomic_DNA"/>
</dbReference>
<dbReference type="RefSeq" id="WP_041603135.1">
    <property type="nucleotide sequence ID" value="NC_011852.1"/>
</dbReference>
<dbReference type="SMR" id="B8F571"/>
<dbReference type="STRING" id="557723.HAPS_0841"/>
<dbReference type="KEGG" id="hap:HAPS_0841"/>
<dbReference type="PATRIC" id="fig|557723.8.peg.841"/>
<dbReference type="HOGENOM" id="CLU_052665_2_0_6"/>
<dbReference type="Proteomes" id="UP000006743">
    <property type="component" value="Chromosome"/>
</dbReference>
<dbReference type="GO" id="GO:0016765">
    <property type="term" value="F:transferase activity, transferring alkyl or aryl (other than methyl) groups"/>
    <property type="evidence" value="ECO:0007669"/>
    <property type="project" value="UniProtKB-UniRule"/>
</dbReference>
<dbReference type="GO" id="GO:0002098">
    <property type="term" value="P:tRNA wobble uridine modification"/>
    <property type="evidence" value="ECO:0007669"/>
    <property type="project" value="InterPro"/>
</dbReference>
<dbReference type="CDD" id="cd02440">
    <property type="entry name" value="AdoMet_MTases"/>
    <property type="match status" value="1"/>
</dbReference>
<dbReference type="Gene3D" id="3.40.50.150">
    <property type="entry name" value="Vaccinia Virus protein VP39"/>
    <property type="match status" value="1"/>
</dbReference>
<dbReference type="HAMAP" id="MF_01590">
    <property type="entry name" value="tRNA_carboxymethyltr_CmoB"/>
    <property type="match status" value="1"/>
</dbReference>
<dbReference type="InterPro" id="IPR010017">
    <property type="entry name" value="CmoB"/>
</dbReference>
<dbReference type="InterPro" id="IPR027555">
    <property type="entry name" value="Mo5U34_MeTrfas-like"/>
</dbReference>
<dbReference type="InterPro" id="IPR029063">
    <property type="entry name" value="SAM-dependent_MTases_sf"/>
</dbReference>
<dbReference type="NCBIfam" id="NF011650">
    <property type="entry name" value="PRK15068.1"/>
    <property type="match status" value="1"/>
</dbReference>
<dbReference type="NCBIfam" id="TIGR00452">
    <property type="entry name" value="tRNA 5-methoxyuridine(34)/uridine 5-oxyacetic acid(34) synthase CmoB"/>
    <property type="match status" value="1"/>
</dbReference>
<dbReference type="PANTHER" id="PTHR43861">
    <property type="entry name" value="TRANS-ACONITATE 2-METHYLTRANSFERASE-RELATED"/>
    <property type="match status" value="1"/>
</dbReference>
<dbReference type="Pfam" id="PF08003">
    <property type="entry name" value="Methyltransf_9"/>
    <property type="match status" value="1"/>
</dbReference>
<dbReference type="SUPFAM" id="SSF53335">
    <property type="entry name" value="S-adenosyl-L-methionine-dependent methyltransferases"/>
    <property type="match status" value="1"/>
</dbReference>
<evidence type="ECO:0000255" key="1">
    <source>
        <dbReference type="HAMAP-Rule" id="MF_01590"/>
    </source>
</evidence>
<evidence type="ECO:0000305" key="2"/>
<name>CMOB_GLAP5</name>
<comment type="function">
    <text evidence="1">Catalyzes carboxymethyl transfer from carboxy-S-adenosyl-L-methionine (Cx-SAM) to 5-hydroxyuridine (ho5U) to form 5-carboxymethoxyuridine (cmo5U) at position 34 in tRNAs.</text>
</comment>
<comment type="catalytic activity">
    <reaction evidence="1">
        <text>carboxy-S-adenosyl-L-methionine + 5-hydroxyuridine(34) in tRNA = 5-carboxymethoxyuridine(34) in tRNA + S-adenosyl-L-homocysteine + H(+)</text>
        <dbReference type="Rhea" id="RHEA:52848"/>
        <dbReference type="Rhea" id="RHEA-COMP:13381"/>
        <dbReference type="Rhea" id="RHEA-COMP:13383"/>
        <dbReference type="ChEBI" id="CHEBI:15378"/>
        <dbReference type="ChEBI" id="CHEBI:57856"/>
        <dbReference type="ChEBI" id="CHEBI:134278"/>
        <dbReference type="ChEBI" id="CHEBI:136877"/>
        <dbReference type="ChEBI" id="CHEBI:136879"/>
    </reaction>
</comment>
<comment type="subunit">
    <text evidence="1">Homotetramer.</text>
</comment>
<comment type="similarity">
    <text evidence="1">Belongs to the class I-like SAM-binding methyltransferase superfamily. CmoB family.</text>
</comment>
<comment type="sequence caution" evidence="2">
    <conflict type="erroneous initiation">
        <sequence resource="EMBL-CDS" id="ACL32473"/>
    </conflict>
</comment>
<feature type="chain" id="PRO_0000381857" description="tRNA U34 carboxymethyltransferase">
    <location>
        <begin position="1"/>
        <end position="320"/>
    </location>
</feature>
<feature type="binding site" evidence="1">
    <location>
        <position position="89"/>
    </location>
    <ligand>
        <name>carboxy-S-adenosyl-L-methionine</name>
        <dbReference type="ChEBI" id="CHEBI:134278"/>
    </ligand>
</feature>
<feature type="binding site" evidence="1">
    <location>
        <position position="103"/>
    </location>
    <ligand>
        <name>carboxy-S-adenosyl-L-methionine</name>
        <dbReference type="ChEBI" id="CHEBI:134278"/>
    </ligand>
</feature>
<feature type="binding site" evidence="1">
    <location>
        <position position="108"/>
    </location>
    <ligand>
        <name>carboxy-S-adenosyl-L-methionine</name>
        <dbReference type="ChEBI" id="CHEBI:134278"/>
    </ligand>
</feature>
<feature type="binding site" evidence="1">
    <location>
        <position position="128"/>
    </location>
    <ligand>
        <name>carboxy-S-adenosyl-L-methionine</name>
        <dbReference type="ChEBI" id="CHEBI:134278"/>
    </ligand>
</feature>
<feature type="binding site" evidence="1">
    <location>
        <begin position="150"/>
        <end position="152"/>
    </location>
    <ligand>
        <name>carboxy-S-adenosyl-L-methionine</name>
        <dbReference type="ChEBI" id="CHEBI:134278"/>
    </ligand>
</feature>
<feature type="binding site" evidence="1">
    <location>
        <begin position="179"/>
        <end position="180"/>
    </location>
    <ligand>
        <name>carboxy-S-adenosyl-L-methionine</name>
        <dbReference type="ChEBI" id="CHEBI:134278"/>
    </ligand>
</feature>
<feature type="binding site" evidence="1">
    <location>
        <position position="194"/>
    </location>
    <ligand>
        <name>carboxy-S-adenosyl-L-methionine</name>
        <dbReference type="ChEBI" id="CHEBI:134278"/>
    </ligand>
</feature>
<feature type="binding site" evidence="1">
    <location>
        <position position="198"/>
    </location>
    <ligand>
        <name>carboxy-S-adenosyl-L-methionine</name>
        <dbReference type="ChEBI" id="CHEBI:134278"/>
    </ligand>
</feature>
<feature type="binding site" evidence="1">
    <location>
        <position position="313"/>
    </location>
    <ligand>
        <name>carboxy-S-adenosyl-L-methionine</name>
        <dbReference type="ChEBI" id="CHEBI:134278"/>
    </ligand>
</feature>
<organism>
    <name type="scientific">Glaesserella parasuis serovar 5 (strain SH0165)</name>
    <name type="common">Haemophilus parasuis</name>
    <dbReference type="NCBI Taxonomy" id="557723"/>
    <lineage>
        <taxon>Bacteria</taxon>
        <taxon>Pseudomonadati</taxon>
        <taxon>Pseudomonadota</taxon>
        <taxon>Gammaproteobacteria</taxon>
        <taxon>Pasteurellales</taxon>
        <taxon>Pasteurellaceae</taxon>
        <taxon>Glaesserella</taxon>
    </lineage>
</organism>